<keyword id="KW-0414">Isoprene biosynthesis</keyword>
<keyword id="KW-0456">Lyase</keyword>
<keyword id="KW-0479">Metal-binding</keyword>
<name>ISPF_GEOSW</name>
<proteinExistence type="inferred from homology"/>
<sequence length="158" mass="17161">MFRIGQGFDVHQLVEGRPLIIGGVRIPYEKGLLGHSDADVLLHAVADACLGAIGAGDIGKHFPDTDECYKDADSALLLKQVWELVKQQGYELANLDCTIIAQKPKMAPHIEQMKENIANLLEGELSQVNVKATTTEKLGFTGREEGIAAQAVVLLQKK</sequence>
<organism>
    <name type="scientific">Geobacillus sp. (strain WCH70)</name>
    <dbReference type="NCBI Taxonomy" id="471223"/>
    <lineage>
        <taxon>Bacteria</taxon>
        <taxon>Bacillati</taxon>
        <taxon>Bacillota</taxon>
        <taxon>Bacilli</taxon>
        <taxon>Bacillales</taxon>
        <taxon>Anoxybacillaceae</taxon>
        <taxon>Geobacillus</taxon>
    </lineage>
</organism>
<feature type="chain" id="PRO_1000202880" description="2-C-methyl-D-erythritol 2,4-cyclodiphosphate synthase">
    <location>
        <begin position="1"/>
        <end position="158"/>
    </location>
</feature>
<feature type="binding site" evidence="1">
    <location>
        <begin position="9"/>
        <end position="11"/>
    </location>
    <ligand>
        <name>4-CDP-2-C-methyl-D-erythritol 2-phosphate</name>
        <dbReference type="ChEBI" id="CHEBI:57919"/>
    </ligand>
</feature>
<feature type="binding site" evidence="1">
    <location>
        <position position="9"/>
    </location>
    <ligand>
        <name>a divalent metal cation</name>
        <dbReference type="ChEBI" id="CHEBI:60240"/>
    </ligand>
</feature>
<feature type="binding site" evidence="1">
    <location>
        <position position="11"/>
    </location>
    <ligand>
        <name>a divalent metal cation</name>
        <dbReference type="ChEBI" id="CHEBI:60240"/>
    </ligand>
</feature>
<feature type="binding site" evidence="1">
    <location>
        <begin position="35"/>
        <end position="36"/>
    </location>
    <ligand>
        <name>4-CDP-2-C-methyl-D-erythritol 2-phosphate</name>
        <dbReference type="ChEBI" id="CHEBI:57919"/>
    </ligand>
</feature>
<feature type="binding site" evidence="1">
    <location>
        <position position="43"/>
    </location>
    <ligand>
        <name>a divalent metal cation</name>
        <dbReference type="ChEBI" id="CHEBI:60240"/>
    </ligand>
</feature>
<feature type="binding site" evidence="1">
    <location>
        <begin position="57"/>
        <end position="59"/>
    </location>
    <ligand>
        <name>4-CDP-2-C-methyl-D-erythritol 2-phosphate</name>
        <dbReference type="ChEBI" id="CHEBI:57919"/>
    </ligand>
</feature>
<feature type="binding site" evidence="1">
    <location>
        <begin position="62"/>
        <end position="66"/>
    </location>
    <ligand>
        <name>4-CDP-2-C-methyl-D-erythritol 2-phosphate</name>
        <dbReference type="ChEBI" id="CHEBI:57919"/>
    </ligand>
</feature>
<feature type="binding site" evidence="1">
    <location>
        <begin position="101"/>
        <end position="107"/>
    </location>
    <ligand>
        <name>4-CDP-2-C-methyl-D-erythritol 2-phosphate</name>
        <dbReference type="ChEBI" id="CHEBI:57919"/>
    </ligand>
</feature>
<feature type="binding site" evidence="1">
    <location>
        <begin position="133"/>
        <end position="136"/>
    </location>
    <ligand>
        <name>4-CDP-2-C-methyl-D-erythritol 2-phosphate</name>
        <dbReference type="ChEBI" id="CHEBI:57919"/>
    </ligand>
</feature>
<feature type="binding site" evidence="1">
    <location>
        <position position="140"/>
    </location>
    <ligand>
        <name>4-CDP-2-C-methyl-D-erythritol 2-phosphate</name>
        <dbReference type="ChEBI" id="CHEBI:57919"/>
    </ligand>
</feature>
<feature type="binding site" evidence="1">
    <location>
        <position position="143"/>
    </location>
    <ligand>
        <name>4-CDP-2-C-methyl-D-erythritol 2-phosphate</name>
        <dbReference type="ChEBI" id="CHEBI:57919"/>
    </ligand>
</feature>
<feature type="site" description="Transition state stabilizer" evidence="1">
    <location>
        <position position="35"/>
    </location>
</feature>
<feature type="site" description="Transition state stabilizer" evidence="1">
    <location>
        <position position="134"/>
    </location>
</feature>
<gene>
    <name evidence="1" type="primary">ispF</name>
    <name type="ordered locus">GWCH70_0087</name>
</gene>
<reference key="1">
    <citation type="submission" date="2009-06" db="EMBL/GenBank/DDBJ databases">
        <title>Complete sequence of chromosome of Geopacillus sp. WCH70.</title>
        <authorList>
            <consortium name="US DOE Joint Genome Institute"/>
            <person name="Lucas S."/>
            <person name="Copeland A."/>
            <person name="Lapidus A."/>
            <person name="Glavina del Rio T."/>
            <person name="Dalin E."/>
            <person name="Tice H."/>
            <person name="Bruce D."/>
            <person name="Goodwin L."/>
            <person name="Pitluck S."/>
            <person name="Chertkov O."/>
            <person name="Brettin T."/>
            <person name="Detter J.C."/>
            <person name="Han C."/>
            <person name="Larimer F."/>
            <person name="Land M."/>
            <person name="Hauser L."/>
            <person name="Kyrpides N."/>
            <person name="Mikhailova N."/>
            <person name="Brumm P."/>
            <person name="Mead D.A."/>
            <person name="Richardson P."/>
        </authorList>
    </citation>
    <scope>NUCLEOTIDE SEQUENCE [LARGE SCALE GENOMIC DNA]</scope>
    <source>
        <strain>WCH70</strain>
    </source>
</reference>
<dbReference type="EC" id="4.6.1.12" evidence="1"/>
<dbReference type="EMBL" id="CP001638">
    <property type="protein sequence ID" value="ACS23027.1"/>
    <property type="molecule type" value="Genomic_DNA"/>
</dbReference>
<dbReference type="SMR" id="C5D3P3"/>
<dbReference type="STRING" id="471223.GWCH70_0087"/>
<dbReference type="KEGG" id="gwc:GWCH70_0087"/>
<dbReference type="eggNOG" id="COG0245">
    <property type="taxonomic scope" value="Bacteria"/>
</dbReference>
<dbReference type="HOGENOM" id="CLU_084630_2_0_9"/>
<dbReference type="OrthoDB" id="9804336at2"/>
<dbReference type="UniPathway" id="UPA00056">
    <property type="reaction ID" value="UER00095"/>
</dbReference>
<dbReference type="GO" id="GO:0008685">
    <property type="term" value="F:2-C-methyl-D-erythritol 2,4-cyclodiphosphate synthase activity"/>
    <property type="evidence" value="ECO:0007669"/>
    <property type="project" value="UniProtKB-UniRule"/>
</dbReference>
<dbReference type="GO" id="GO:0046872">
    <property type="term" value="F:metal ion binding"/>
    <property type="evidence" value="ECO:0007669"/>
    <property type="project" value="UniProtKB-KW"/>
</dbReference>
<dbReference type="GO" id="GO:0019288">
    <property type="term" value="P:isopentenyl diphosphate biosynthetic process, methylerythritol 4-phosphate pathway"/>
    <property type="evidence" value="ECO:0007669"/>
    <property type="project" value="UniProtKB-UniRule"/>
</dbReference>
<dbReference type="GO" id="GO:0016114">
    <property type="term" value="P:terpenoid biosynthetic process"/>
    <property type="evidence" value="ECO:0007669"/>
    <property type="project" value="InterPro"/>
</dbReference>
<dbReference type="CDD" id="cd00554">
    <property type="entry name" value="MECDP_synthase"/>
    <property type="match status" value="1"/>
</dbReference>
<dbReference type="FunFam" id="3.30.1330.50:FF:000001">
    <property type="entry name" value="2-C-methyl-D-erythritol 2,4-cyclodiphosphate synthase"/>
    <property type="match status" value="1"/>
</dbReference>
<dbReference type="Gene3D" id="3.30.1330.50">
    <property type="entry name" value="2-C-methyl-D-erythritol 2,4-cyclodiphosphate synthase"/>
    <property type="match status" value="1"/>
</dbReference>
<dbReference type="HAMAP" id="MF_00107">
    <property type="entry name" value="IspF"/>
    <property type="match status" value="1"/>
</dbReference>
<dbReference type="InterPro" id="IPR003526">
    <property type="entry name" value="MECDP_synthase"/>
</dbReference>
<dbReference type="InterPro" id="IPR020555">
    <property type="entry name" value="MECDP_synthase_CS"/>
</dbReference>
<dbReference type="InterPro" id="IPR036571">
    <property type="entry name" value="MECDP_synthase_sf"/>
</dbReference>
<dbReference type="NCBIfam" id="TIGR00151">
    <property type="entry name" value="ispF"/>
    <property type="match status" value="1"/>
</dbReference>
<dbReference type="PANTHER" id="PTHR43181">
    <property type="entry name" value="2-C-METHYL-D-ERYTHRITOL 2,4-CYCLODIPHOSPHATE SYNTHASE, CHLOROPLASTIC"/>
    <property type="match status" value="1"/>
</dbReference>
<dbReference type="PANTHER" id="PTHR43181:SF1">
    <property type="entry name" value="2-C-METHYL-D-ERYTHRITOL 2,4-CYCLODIPHOSPHATE SYNTHASE, CHLOROPLASTIC"/>
    <property type="match status" value="1"/>
</dbReference>
<dbReference type="Pfam" id="PF02542">
    <property type="entry name" value="YgbB"/>
    <property type="match status" value="1"/>
</dbReference>
<dbReference type="SUPFAM" id="SSF69765">
    <property type="entry name" value="IpsF-like"/>
    <property type="match status" value="1"/>
</dbReference>
<dbReference type="PROSITE" id="PS01350">
    <property type="entry name" value="ISPF"/>
    <property type="match status" value="1"/>
</dbReference>
<evidence type="ECO:0000255" key="1">
    <source>
        <dbReference type="HAMAP-Rule" id="MF_00107"/>
    </source>
</evidence>
<accession>C5D3P3</accession>
<comment type="function">
    <text evidence="1">Involved in the biosynthesis of isopentenyl diphosphate (IPP) and dimethylallyl diphosphate (DMAPP), two major building blocks of isoprenoid compounds. Catalyzes the conversion of 4-diphosphocytidyl-2-C-methyl-D-erythritol 2-phosphate (CDP-ME2P) to 2-C-methyl-D-erythritol 2,4-cyclodiphosphate (ME-CPP) with a corresponding release of cytidine 5-monophosphate (CMP).</text>
</comment>
<comment type="catalytic activity">
    <reaction evidence="1">
        <text>4-CDP-2-C-methyl-D-erythritol 2-phosphate = 2-C-methyl-D-erythritol 2,4-cyclic diphosphate + CMP</text>
        <dbReference type="Rhea" id="RHEA:23864"/>
        <dbReference type="ChEBI" id="CHEBI:57919"/>
        <dbReference type="ChEBI" id="CHEBI:58483"/>
        <dbReference type="ChEBI" id="CHEBI:60377"/>
        <dbReference type="EC" id="4.6.1.12"/>
    </reaction>
</comment>
<comment type="cofactor">
    <cofactor evidence="1">
        <name>a divalent metal cation</name>
        <dbReference type="ChEBI" id="CHEBI:60240"/>
    </cofactor>
    <text evidence="1">Binds 1 divalent metal cation per subunit.</text>
</comment>
<comment type="pathway">
    <text evidence="1">Isoprenoid biosynthesis; isopentenyl diphosphate biosynthesis via DXP pathway; isopentenyl diphosphate from 1-deoxy-D-xylulose 5-phosphate: step 4/6.</text>
</comment>
<comment type="subunit">
    <text evidence="1">Homotrimer.</text>
</comment>
<comment type="similarity">
    <text evidence="1">Belongs to the IspF family.</text>
</comment>
<protein>
    <recommendedName>
        <fullName evidence="1">2-C-methyl-D-erythritol 2,4-cyclodiphosphate synthase</fullName>
        <shortName evidence="1">MECDP-synthase</shortName>
        <shortName evidence="1">MECPP-synthase</shortName>
        <shortName evidence="1">MECPS</shortName>
        <ecNumber evidence="1">4.6.1.12</ecNumber>
    </recommendedName>
</protein>